<proteinExistence type="evidence at protein level"/>
<keyword id="KW-0058">Aromatic hydrocarbons catabolism</keyword>
<keyword id="KW-0903">Direct protein sequencing</keyword>
<keyword id="KW-0378">Hydrolase</keyword>
<reference key="1">
    <citation type="journal article" date="1991" name="Eur. J. Biochem.">
        <title>Characterization of the epoxide hydrolase from an epichlorohydrin-degrading Pseudomonas sp.</title>
        <authorList>
            <person name="Jacobs M.H."/>
            <person name="van der Wijngaard A.J."/>
            <person name="Pentenga M."/>
            <person name="Janssen D.B."/>
        </authorList>
    </citation>
    <scope>PROTEIN SEQUENCE</scope>
</reference>
<dbReference type="EC" id="3.3.2.10"/>
<dbReference type="PIR" id="S19575">
    <property type="entry name" value="S19575"/>
</dbReference>
<dbReference type="GO" id="GO:0004301">
    <property type="term" value="F:epoxide hydrolase activity"/>
    <property type="evidence" value="ECO:0007669"/>
    <property type="project" value="UniProtKB-EC"/>
</dbReference>
<dbReference type="GO" id="GO:0009056">
    <property type="term" value="P:catabolic process"/>
    <property type="evidence" value="ECO:0007669"/>
    <property type="project" value="UniProtKB-KW"/>
</dbReference>
<sequence length="77" mass="8926">TIDXPEDFKHYEVQLPDVKIHYVREGAGPTLLLVEKPEIAIDRIKTAFRKPDNIHGGFNYYRANIRPDAALWTDLDH</sequence>
<organism>
    <name type="scientific">Pseudomonas sp. (strain AD1)</name>
    <dbReference type="NCBI Taxonomy" id="72585"/>
    <lineage>
        <taxon>Bacteria</taxon>
        <taxon>Pseudomonadati</taxon>
        <taxon>Pseudomonadota</taxon>
    </lineage>
</organism>
<evidence type="ECO:0000305" key="1"/>
<accession>P80048</accession>
<comment type="function">
    <text>This enzyme acts on aliphatic epoxides. Its substrates include epichlorohydrin, epibromohydrin, epoxyoctane and styrene epoxide.</text>
</comment>
<comment type="catalytic activity">
    <reaction>
        <text>an epoxide + H2O = an ethanediol</text>
        <dbReference type="Rhea" id="RHEA:19037"/>
        <dbReference type="ChEBI" id="CHEBI:15377"/>
        <dbReference type="ChEBI" id="CHEBI:32955"/>
        <dbReference type="ChEBI" id="CHEBI:140594"/>
        <dbReference type="EC" id="3.3.2.10"/>
    </reaction>
</comment>
<comment type="subunit">
    <text>Monomer.</text>
</comment>
<protein>
    <recommendedName>
        <fullName>Epoxide hydrolase</fullName>
        <ecNumber>3.3.2.10</ecNumber>
    </recommendedName>
    <alternativeName>
        <fullName>Epoxide hydratase</fullName>
    </alternativeName>
</protein>
<feature type="chain" id="PRO_0000084108" description="Epoxide hydrolase">
    <location>
        <begin position="1"/>
        <end position="77"/>
    </location>
</feature>
<feature type="non-consecutive residues" evidence="1">
    <location>
        <begin position="33"/>
        <end position="34"/>
    </location>
</feature>
<feature type="non-consecutive residues" evidence="1">
    <location>
        <begin position="49"/>
        <end position="50"/>
    </location>
</feature>
<name>HYEP_PSEU1</name>